<evidence type="ECO:0000255" key="1">
    <source>
        <dbReference type="HAMAP-Rule" id="MF_00550"/>
    </source>
</evidence>
<sequence>MNLVERFLKYVSFDTQSDELTRLTPSTPGQMVFAEYLKSELESLGLEDITLDENGYLFATLPANTEKELPVIGFIAHMDTSPDMSGKNVTPRIVEKYDGSDIVLCAEENIVLSPSQFPELLDHKGEDLIVTNGKTLLGADDKAGIAEIVSAVVYLQEHPEIKHGKIRIGFNPDEEIGEGAHKFDVQKFGCEWAYTMDGGEVGELEFENFNAAAAKITFKGRNVHPGYAKHKMINSIRIANQFITMLPRHETPEHTSGYEGFYHLIGIQGDVEQSTVSYIIRDHDRNKFEDRKKEIEHLVNKINAEFGEGTATLELRDQYYNMREKIEPVMHIIDTAFAAMEAVGVKPNVKPIRGGTDGAQLSFKGLPCPNIFAGGLNFHGRYEFVPIQNMEKAMKVIVKIAELVASK</sequence>
<organism>
    <name type="scientific">Bacteroides fragilis (strain ATCC 25285 / DSM 2151 / CCUG 4856 / JCM 11019 / LMG 10263 / NCTC 9343 / Onslow / VPI 2553 / EN-2)</name>
    <dbReference type="NCBI Taxonomy" id="272559"/>
    <lineage>
        <taxon>Bacteria</taxon>
        <taxon>Pseudomonadati</taxon>
        <taxon>Bacteroidota</taxon>
        <taxon>Bacteroidia</taxon>
        <taxon>Bacteroidales</taxon>
        <taxon>Bacteroidaceae</taxon>
        <taxon>Bacteroides</taxon>
    </lineage>
</organism>
<protein>
    <recommendedName>
        <fullName evidence="1">Peptidase T</fullName>
        <ecNumber evidence="1">3.4.11.4</ecNumber>
    </recommendedName>
    <alternativeName>
        <fullName evidence="1">Aminotripeptidase</fullName>
        <shortName evidence="1">Tripeptidase</shortName>
    </alternativeName>
    <alternativeName>
        <fullName evidence="1">Tripeptide aminopeptidase</fullName>
    </alternativeName>
</protein>
<feature type="chain" id="PRO_0000185286" description="Peptidase T">
    <location>
        <begin position="1"/>
        <end position="407"/>
    </location>
</feature>
<feature type="active site" evidence="1">
    <location>
        <position position="79"/>
    </location>
</feature>
<feature type="active site" description="Proton acceptor" evidence="1">
    <location>
        <position position="174"/>
    </location>
</feature>
<feature type="binding site" evidence="1">
    <location>
        <position position="77"/>
    </location>
    <ligand>
        <name>Zn(2+)</name>
        <dbReference type="ChEBI" id="CHEBI:29105"/>
        <label>1</label>
    </ligand>
</feature>
<feature type="binding site" evidence="1">
    <location>
        <position position="140"/>
    </location>
    <ligand>
        <name>Zn(2+)</name>
        <dbReference type="ChEBI" id="CHEBI:29105"/>
        <label>1</label>
    </ligand>
</feature>
<feature type="binding site" evidence="1">
    <location>
        <position position="140"/>
    </location>
    <ligand>
        <name>Zn(2+)</name>
        <dbReference type="ChEBI" id="CHEBI:29105"/>
        <label>2</label>
    </ligand>
</feature>
<feature type="binding site" evidence="1">
    <location>
        <position position="175"/>
    </location>
    <ligand>
        <name>Zn(2+)</name>
        <dbReference type="ChEBI" id="CHEBI:29105"/>
        <label>2</label>
    </ligand>
</feature>
<feature type="binding site" evidence="1">
    <location>
        <position position="197"/>
    </location>
    <ligand>
        <name>Zn(2+)</name>
        <dbReference type="ChEBI" id="CHEBI:29105"/>
        <label>1</label>
    </ligand>
</feature>
<feature type="binding site" evidence="1">
    <location>
        <position position="379"/>
    </location>
    <ligand>
        <name>Zn(2+)</name>
        <dbReference type="ChEBI" id="CHEBI:29105"/>
        <label>2</label>
    </ligand>
</feature>
<dbReference type="EC" id="3.4.11.4" evidence="1"/>
<dbReference type="EMBL" id="CR626927">
    <property type="protein sequence ID" value="CAH07006.1"/>
    <property type="molecule type" value="Genomic_DNA"/>
</dbReference>
<dbReference type="RefSeq" id="WP_005786005.1">
    <property type="nucleotide sequence ID" value="NZ_UFTH01000001.1"/>
</dbReference>
<dbReference type="SMR" id="Q5LFT7"/>
<dbReference type="MEROPS" id="M20.003"/>
<dbReference type="PaxDb" id="272559-BF9343_1225"/>
<dbReference type="GeneID" id="60367367"/>
<dbReference type="KEGG" id="bfs:BF9343_1225"/>
<dbReference type="eggNOG" id="COG2195">
    <property type="taxonomic scope" value="Bacteria"/>
</dbReference>
<dbReference type="HOGENOM" id="CLU_053676_0_0_10"/>
<dbReference type="Proteomes" id="UP000006731">
    <property type="component" value="Chromosome"/>
</dbReference>
<dbReference type="GO" id="GO:0005829">
    <property type="term" value="C:cytosol"/>
    <property type="evidence" value="ECO:0007669"/>
    <property type="project" value="TreeGrafter"/>
</dbReference>
<dbReference type="GO" id="GO:0008237">
    <property type="term" value="F:metallopeptidase activity"/>
    <property type="evidence" value="ECO:0007669"/>
    <property type="project" value="UniProtKB-KW"/>
</dbReference>
<dbReference type="GO" id="GO:0045148">
    <property type="term" value="F:tripeptide aminopeptidase activity"/>
    <property type="evidence" value="ECO:0007669"/>
    <property type="project" value="UniProtKB-UniRule"/>
</dbReference>
<dbReference type="GO" id="GO:0008270">
    <property type="term" value="F:zinc ion binding"/>
    <property type="evidence" value="ECO:0007669"/>
    <property type="project" value="UniProtKB-UniRule"/>
</dbReference>
<dbReference type="GO" id="GO:0043171">
    <property type="term" value="P:peptide catabolic process"/>
    <property type="evidence" value="ECO:0007669"/>
    <property type="project" value="UniProtKB-UniRule"/>
</dbReference>
<dbReference type="GO" id="GO:0006508">
    <property type="term" value="P:proteolysis"/>
    <property type="evidence" value="ECO:0007669"/>
    <property type="project" value="UniProtKB-UniRule"/>
</dbReference>
<dbReference type="CDD" id="cd03892">
    <property type="entry name" value="M20_peptT"/>
    <property type="match status" value="1"/>
</dbReference>
<dbReference type="FunFam" id="3.30.70.360:FF:000002">
    <property type="entry name" value="Peptidase T"/>
    <property type="match status" value="1"/>
</dbReference>
<dbReference type="Gene3D" id="3.30.70.360">
    <property type="match status" value="1"/>
</dbReference>
<dbReference type="Gene3D" id="3.40.630.10">
    <property type="entry name" value="Zn peptidases"/>
    <property type="match status" value="1"/>
</dbReference>
<dbReference type="HAMAP" id="MF_00550">
    <property type="entry name" value="Aminopeptidase_M20"/>
    <property type="match status" value="1"/>
</dbReference>
<dbReference type="InterPro" id="IPR001261">
    <property type="entry name" value="ArgE/DapE_CS"/>
</dbReference>
<dbReference type="InterPro" id="IPR036264">
    <property type="entry name" value="Bact_exopeptidase_dim_dom"/>
</dbReference>
<dbReference type="InterPro" id="IPR002933">
    <property type="entry name" value="Peptidase_M20"/>
</dbReference>
<dbReference type="InterPro" id="IPR011650">
    <property type="entry name" value="Peptidase_M20_dimer"/>
</dbReference>
<dbReference type="InterPro" id="IPR010161">
    <property type="entry name" value="Peptidase_M20B"/>
</dbReference>
<dbReference type="NCBIfam" id="TIGR01882">
    <property type="entry name" value="peptidase-T"/>
    <property type="match status" value="1"/>
</dbReference>
<dbReference type="NCBIfam" id="NF003976">
    <property type="entry name" value="PRK05469.1"/>
    <property type="match status" value="1"/>
</dbReference>
<dbReference type="NCBIfam" id="NF009920">
    <property type="entry name" value="PRK13381.1"/>
    <property type="match status" value="1"/>
</dbReference>
<dbReference type="PANTHER" id="PTHR42994">
    <property type="entry name" value="PEPTIDASE T"/>
    <property type="match status" value="1"/>
</dbReference>
<dbReference type="PANTHER" id="PTHR42994:SF1">
    <property type="entry name" value="PEPTIDASE T"/>
    <property type="match status" value="1"/>
</dbReference>
<dbReference type="Pfam" id="PF07687">
    <property type="entry name" value="M20_dimer"/>
    <property type="match status" value="1"/>
</dbReference>
<dbReference type="Pfam" id="PF01546">
    <property type="entry name" value="Peptidase_M20"/>
    <property type="match status" value="1"/>
</dbReference>
<dbReference type="PIRSF" id="PIRSF037215">
    <property type="entry name" value="Peptidase_M20B"/>
    <property type="match status" value="1"/>
</dbReference>
<dbReference type="SUPFAM" id="SSF55031">
    <property type="entry name" value="Bacterial exopeptidase dimerisation domain"/>
    <property type="match status" value="1"/>
</dbReference>
<dbReference type="SUPFAM" id="SSF53187">
    <property type="entry name" value="Zn-dependent exopeptidases"/>
    <property type="match status" value="1"/>
</dbReference>
<dbReference type="PROSITE" id="PS00758">
    <property type="entry name" value="ARGE_DAPE_CPG2_1"/>
    <property type="match status" value="1"/>
</dbReference>
<dbReference type="PROSITE" id="PS00759">
    <property type="entry name" value="ARGE_DAPE_CPG2_2"/>
    <property type="match status" value="1"/>
</dbReference>
<reference key="1">
    <citation type="journal article" date="2005" name="Science">
        <title>Extensive DNA inversions in the B. fragilis genome control variable gene expression.</title>
        <authorList>
            <person name="Cerdeno-Tarraga A.-M."/>
            <person name="Patrick S."/>
            <person name="Crossman L.C."/>
            <person name="Blakely G."/>
            <person name="Abratt V."/>
            <person name="Lennard N."/>
            <person name="Poxton I."/>
            <person name="Duerden B."/>
            <person name="Harris B."/>
            <person name="Quail M.A."/>
            <person name="Barron A."/>
            <person name="Clark L."/>
            <person name="Corton C."/>
            <person name="Doggett J."/>
            <person name="Holden M.T.G."/>
            <person name="Larke N."/>
            <person name="Line A."/>
            <person name="Lord A."/>
            <person name="Norbertczak H."/>
            <person name="Ormond D."/>
            <person name="Price C."/>
            <person name="Rabbinowitsch E."/>
            <person name="Woodward J."/>
            <person name="Barrell B.G."/>
            <person name="Parkhill J."/>
        </authorList>
    </citation>
    <scope>NUCLEOTIDE SEQUENCE [LARGE SCALE GENOMIC DNA]</scope>
    <source>
        <strain>ATCC 25285 / DSM 2151 / CCUG 4856 / JCM 11019 / LMG 10263 / NCTC 9343 / Onslow / VPI 2553 / EN-2</strain>
    </source>
</reference>
<keyword id="KW-0031">Aminopeptidase</keyword>
<keyword id="KW-0963">Cytoplasm</keyword>
<keyword id="KW-0378">Hydrolase</keyword>
<keyword id="KW-0479">Metal-binding</keyword>
<keyword id="KW-0482">Metalloprotease</keyword>
<keyword id="KW-0645">Protease</keyword>
<keyword id="KW-0862">Zinc</keyword>
<name>PEPT_BACFN</name>
<gene>
    <name evidence="1" type="primary">pepT</name>
    <name type="ordered locus">BF1289</name>
</gene>
<comment type="function">
    <text evidence="1">Cleaves the N-terminal amino acid of tripeptides.</text>
</comment>
<comment type="catalytic activity">
    <reaction evidence="1">
        <text>Release of the N-terminal residue from a tripeptide.</text>
        <dbReference type="EC" id="3.4.11.4"/>
    </reaction>
</comment>
<comment type="cofactor">
    <cofactor evidence="1">
        <name>Zn(2+)</name>
        <dbReference type="ChEBI" id="CHEBI:29105"/>
    </cofactor>
    <text evidence="1">Binds 2 Zn(2+) ions per subunit.</text>
</comment>
<comment type="subcellular location">
    <subcellularLocation>
        <location evidence="1">Cytoplasm</location>
    </subcellularLocation>
</comment>
<comment type="similarity">
    <text evidence="1">Belongs to the peptidase M20B family.</text>
</comment>
<proteinExistence type="inferred from homology"/>
<accession>Q5LFT7</accession>